<keyword id="KW-0479">Metal-binding</keyword>
<keyword id="KW-0687">Ribonucleoprotein</keyword>
<keyword id="KW-0689">Ribosomal protein</keyword>
<keyword id="KW-0694">RNA-binding</keyword>
<keyword id="KW-0699">rRNA-binding</keyword>
<keyword id="KW-0862">Zinc</keyword>
<feature type="chain" id="PRO_1000067934" description="Small ribosomal subunit protein uS14">
    <location>
        <begin position="1"/>
        <end position="61"/>
    </location>
</feature>
<feature type="binding site" evidence="1">
    <location>
        <position position="24"/>
    </location>
    <ligand>
        <name>Zn(2+)</name>
        <dbReference type="ChEBI" id="CHEBI:29105"/>
    </ligand>
</feature>
<feature type="binding site" evidence="1">
    <location>
        <position position="27"/>
    </location>
    <ligand>
        <name>Zn(2+)</name>
        <dbReference type="ChEBI" id="CHEBI:29105"/>
    </ligand>
</feature>
<feature type="binding site" evidence="1">
    <location>
        <position position="40"/>
    </location>
    <ligand>
        <name>Zn(2+)</name>
        <dbReference type="ChEBI" id="CHEBI:29105"/>
    </ligand>
</feature>
<feature type="binding site" evidence="1">
    <location>
        <position position="43"/>
    </location>
    <ligand>
        <name>Zn(2+)</name>
        <dbReference type="ChEBI" id="CHEBI:29105"/>
    </ligand>
</feature>
<protein>
    <recommendedName>
        <fullName evidence="1">Small ribosomal subunit protein uS14</fullName>
    </recommendedName>
    <alternativeName>
        <fullName evidence="2">30S ribosomal protein S14 type Z</fullName>
    </alternativeName>
</protein>
<accession>A7FZ56</accession>
<gene>
    <name evidence="1" type="primary">rpsZ</name>
    <name evidence="1" type="synonym">rpsN</name>
    <name type="ordered locus">CLB_3524</name>
</gene>
<sequence>MARKALIEKWNKTPKHSTRAYTRCRICGRPHAVLKKYGICRICFRELAYKGEIPGCKKASW</sequence>
<proteinExistence type="inferred from homology"/>
<name>RS14Z_CLOB1</name>
<organism>
    <name type="scientific">Clostridium botulinum (strain ATCC 19397 / Type A)</name>
    <dbReference type="NCBI Taxonomy" id="441770"/>
    <lineage>
        <taxon>Bacteria</taxon>
        <taxon>Bacillati</taxon>
        <taxon>Bacillota</taxon>
        <taxon>Clostridia</taxon>
        <taxon>Eubacteriales</taxon>
        <taxon>Clostridiaceae</taxon>
        <taxon>Clostridium</taxon>
    </lineage>
</organism>
<comment type="function">
    <text evidence="1">Binds 16S rRNA, required for the assembly of 30S particles and may also be responsible for determining the conformation of the 16S rRNA at the A site.</text>
</comment>
<comment type="cofactor">
    <cofactor evidence="1">
        <name>Zn(2+)</name>
        <dbReference type="ChEBI" id="CHEBI:29105"/>
    </cofactor>
    <text evidence="1">Binds 1 zinc ion per subunit.</text>
</comment>
<comment type="subunit">
    <text evidence="1">Part of the 30S ribosomal subunit. Contacts proteins S3 and S10.</text>
</comment>
<comment type="similarity">
    <text evidence="1">Belongs to the universal ribosomal protein uS14 family. Zinc-binding uS14 subfamily.</text>
</comment>
<dbReference type="EMBL" id="CP000726">
    <property type="protein sequence ID" value="ABS33622.1"/>
    <property type="molecule type" value="Genomic_DNA"/>
</dbReference>
<dbReference type="RefSeq" id="WP_003357636.1">
    <property type="nucleotide sequence ID" value="NC_009697.1"/>
</dbReference>
<dbReference type="SMR" id="A7FZ56"/>
<dbReference type="KEGG" id="cba:CLB_3524"/>
<dbReference type="HOGENOM" id="CLU_139869_3_0_9"/>
<dbReference type="GO" id="GO:0005737">
    <property type="term" value="C:cytoplasm"/>
    <property type="evidence" value="ECO:0007669"/>
    <property type="project" value="UniProtKB-ARBA"/>
</dbReference>
<dbReference type="GO" id="GO:0015935">
    <property type="term" value="C:small ribosomal subunit"/>
    <property type="evidence" value="ECO:0007669"/>
    <property type="project" value="TreeGrafter"/>
</dbReference>
<dbReference type="GO" id="GO:0019843">
    <property type="term" value="F:rRNA binding"/>
    <property type="evidence" value="ECO:0007669"/>
    <property type="project" value="UniProtKB-UniRule"/>
</dbReference>
<dbReference type="GO" id="GO:0003735">
    <property type="term" value="F:structural constituent of ribosome"/>
    <property type="evidence" value="ECO:0007669"/>
    <property type="project" value="InterPro"/>
</dbReference>
<dbReference type="GO" id="GO:0008270">
    <property type="term" value="F:zinc ion binding"/>
    <property type="evidence" value="ECO:0007669"/>
    <property type="project" value="UniProtKB-UniRule"/>
</dbReference>
<dbReference type="GO" id="GO:0006412">
    <property type="term" value="P:translation"/>
    <property type="evidence" value="ECO:0007669"/>
    <property type="project" value="UniProtKB-UniRule"/>
</dbReference>
<dbReference type="FunFam" id="4.10.830.10:FF:000001">
    <property type="entry name" value="30S ribosomal protein S14 type Z"/>
    <property type="match status" value="1"/>
</dbReference>
<dbReference type="Gene3D" id="4.10.830.10">
    <property type="entry name" value="30s Ribosomal Protein S14, Chain N"/>
    <property type="match status" value="1"/>
</dbReference>
<dbReference type="HAMAP" id="MF_01364_B">
    <property type="entry name" value="Ribosomal_uS14_2_B"/>
    <property type="match status" value="1"/>
</dbReference>
<dbReference type="InterPro" id="IPR001209">
    <property type="entry name" value="Ribosomal_uS14"/>
</dbReference>
<dbReference type="InterPro" id="IPR023053">
    <property type="entry name" value="Ribosomal_uS14_bact"/>
</dbReference>
<dbReference type="InterPro" id="IPR043140">
    <property type="entry name" value="Ribosomal_uS14_sf"/>
</dbReference>
<dbReference type="NCBIfam" id="NF005974">
    <property type="entry name" value="PRK08061.1"/>
    <property type="match status" value="1"/>
</dbReference>
<dbReference type="PANTHER" id="PTHR19836">
    <property type="entry name" value="30S RIBOSOMAL PROTEIN S14"/>
    <property type="match status" value="1"/>
</dbReference>
<dbReference type="PANTHER" id="PTHR19836:SF19">
    <property type="entry name" value="SMALL RIBOSOMAL SUBUNIT PROTEIN US14M"/>
    <property type="match status" value="1"/>
</dbReference>
<dbReference type="Pfam" id="PF00253">
    <property type="entry name" value="Ribosomal_S14"/>
    <property type="match status" value="1"/>
</dbReference>
<dbReference type="SUPFAM" id="SSF57716">
    <property type="entry name" value="Glucocorticoid receptor-like (DNA-binding domain)"/>
    <property type="match status" value="1"/>
</dbReference>
<evidence type="ECO:0000255" key="1">
    <source>
        <dbReference type="HAMAP-Rule" id="MF_01364"/>
    </source>
</evidence>
<evidence type="ECO:0000305" key="2"/>
<reference key="1">
    <citation type="journal article" date="2007" name="PLoS ONE">
        <title>Analysis of the neurotoxin complex genes in Clostridium botulinum A1-A4 and B1 strains: BoNT/A3, /Ba4 and /B1 clusters are located within plasmids.</title>
        <authorList>
            <person name="Smith T.J."/>
            <person name="Hill K.K."/>
            <person name="Foley B.T."/>
            <person name="Detter J.C."/>
            <person name="Munk A.C."/>
            <person name="Bruce D.C."/>
            <person name="Doggett N.A."/>
            <person name="Smith L.A."/>
            <person name="Marks J.D."/>
            <person name="Xie G."/>
            <person name="Brettin T.S."/>
        </authorList>
    </citation>
    <scope>NUCLEOTIDE SEQUENCE [LARGE SCALE GENOMIC DNA]</scope>
    <source>
        <strain>ATCC 19397 / Type A</strain>
    </source>
</reference>